<evidence type="ECO:0000255" key="1">
    <source>
        <dbReference type="HAMAP-Rule" id="MF_00073"/>
    </source>
</evidence>
<organism>
    <name type="scientific">Alkaliphilus oremlandii (strain OhILAs)</name>
    <name type="common">Clostridium oremlandii (strain OhILAs)</name>
    <dbReference type="NCBI Taxonomy" id="350688"/>
    <lineage>
        <taxon>Bacteria</taxon>
        <taxon>Bacillati</taxon>
        <taxon>Bacillota</taxon>
        <taxon>Clostridia</taxon>
        <taxon>Peptostreptococcales</taxon>
        <taxon>Natronincolaceae</taxon>
        <taxon>Alkaliphilus</taxon>
    </lineage>
</organism>
<comment type="function">
    <text evidence="1">Involved in transcription antitermination. Required for transcription of ribosomal RNA (rRNA) genes. Binds specifically to the boxA antiterminator sequence of the ribosomal RNA (rrn) operons.</text>
</comment>
<comment type="similarity">
    <text evidence="1">Belongs to the NusB family.</text>
</comment>
<keyword id="KW-1185">Reference proteome</keyword>
<keyword id="KW-0694">RNA-binding</keyword>
<keyword id="KW-0804">Transcription</keyword>
<keyword id="KW-0889">Transcription antitermination</keyword>
<keyword id="KW-0805">Transcription regulation</keyword>
<gene>
    <name evidence="1" type="primary">nusB</name>
    <name type="ordered locus">Clos_1613</name>
</gene>
<sequence length="138" mass="16116">MSRKLARELTMKVLFEMHINNDFNIQRVEHHLFEGSIEEQQKEYIHKVLNEAILNLEAIDSIIEEYSTSWKLNRIANVDLAILRLAFSEIIYMKDIPYRVSINEAIELAKIYGSDETPNFVNGILGKYVEQEGLMLNE</sequence>
<dbReference type="EMBL" id="CP000853">
    <property type="protein sequence ID" value="ABW19156.1"/>
    <property type="molecule type" value="Genomic_DNA"/>
</dbReference>
<dbReference type="RefSeq" id="WP_012159468.1">
    <property type="nucleotide sequence ID" value="NC_009922.1"/>
</dbReference>
<dbReference type="SMR" id="A8MFJ3"/>
<dbReference type="STRING" id="350688.Clos_1613"/>
<dbReference type="KEGG" id="aoe:Clos_1613"/>
<dbReference type="eggNOG" id="COG0781">
    <property type="taxonomic scope" value="Bacteria"/>
</dbReference>
<dbReference type="HOGENOM" id="CLU_087843_3_3_9"/>
<dbReference type="OrthoDB" id="9811381at2"/>
<dbReference type="Proteomes" id="UP000000269">
    <property type="component" value="Chromosome"/>
</dbReference>
<dbReference type="GO" id="GO:0005829">
    <property type="term" value="C:cytosol"/>
    <property type="evidence" value="ECO:0007669"/>
    <property type="project" value="TreeGrafter"/>
</dbReference>
<dbReference type="GO" id="GO:0003723">
    <property type="term" value="F:RNA binding"/>
    <property type="evidence" value="ECO:0007669"/>
    <property type="project" value="UniProtKB-UniRule"/>
</dbReference>
<dbReference type="GO" id="GO:0006353">
    <property type="term" value="P:DNA-templated transcription termination"/>
    <property type="evidence" value="ECO:0007669"/>
    <property type="project" value="UniProtKB-UniRule"/>
</dbReference>
<dbReference type="GO" id="GO:0031564">
    <property type="term" value="P:transcription antitermination"/>
    <property type="evidence" value="ECO:0007669"/>
    <property type="project" value="UniProtKB-KW"/>
</dbReference>
<dbReference type="Gene3D" id="1.10.940.10">
    <property type="entry name" value="NusB-like"/>
    <property type="match status" value="1"/>
</dbReference>
<dbReference type="HAMAP" id="MF_00073">
    <property type="entry name" value="NusB"/>
    <property type="match status" value="1"/>
</dbReference>
<dbReference type="InterPro" id="IPR035926">
    <property type="entry name" value="NusB-like_sf"/>
</dbReference>
<dbReference type="InterPro" id="IPR011605">
    <property type="entry name" value="NusB_fam"/>
</dbReference>
<dbReference type="InterPro" id="IPR006027">
    <property type="entry name" value="NusB_RsmB_TIM44"/>
</dbReference>
<dbReference type="NCBIfam" id="TIGR01951">
    <property type="entry name" value="nusB"/>
    <property type="match status" value="1"/>
</dbReference>
<dbReference type="PANTHER" id="PTHR11078:SF3">
    <property type="entry name" value="ANTITERMINATION NUSB DOMAIN-CONTAINING PROTEIN"/>
    <property type="match status" value="1"/>
</dbReference>
<dbReference type="PANTHER" id="PTHR11078">
    <property type="entry name" value="N UTILIZATION SUBSTANCE PROTEIN B-RELATED"/>
    <property type="match status" value="1"/>
</dbReference>
<dbReference type="Pfam" id="PF01029">
    <property type="entry name" value="NusB"/>
    <property type="match status" value="1"/>
</dbReference>
<dbReference type="SUPFAM" id="SSF48013">
    <property type="entry name" value="NusB-like"/>
    <property type="match status" value="1"/>
</dbReference>
<proteinExistence type="inferred from homology"/>
<reference key="1">
    <citation type="submission" date="2007-10" db="EMBL/GenBank/DDBJ databases">
        <title>Complete genome of Alkaliphilus oremlandii OhILAs.</title>
        <authorList>
            <person name="Copeland A."/>
            <person name="Lucas S."/>
            <person name="Lapidus A."/>
            <person name="Barry K."/>
            <person name="Detter J.C."/>
            <person name="Glavina del Rio T."/>
            <person name="Hammon N."/>
            <person name="Israni S."/>
            <person name="Dalin E."/>
            <person name="Tice H."/>
            <person name="Pitluck S."/>
            <person name="Chain P."/>
            <person name="Malfatti S."/>
            <person name="Shin M."/>
            <person name="Vergez L."/>
            <person name="Schmutz J."/>
            <person name="Larimer F."/>
            <person name="Land M."/>
            <person name="Hauser L."/>
            <person name="Kyrpides N."/>
            <person name="Mikhailova N."/>
            <person name="Stolz J.F."/>
            <person name="Dawson A."/>
            <person name="Fisher E."/>
            <person name="Crable B."/>
            <person name="Perera E."/>
            <person name="Lisak J."/>
            <person name="Ranganathan M."/>
            <person name="Basu P."/>
            <person name="Richardson P."/>
        </authorList>
    </citation>
    <scope>NUCLEOTIDE SEQUENCE [LARGE SCALE GENOMIC DNA]</scope>
    <source>
        <strain>OhILAs</strain>
    </source>
</reference>
<protein>
    <recommendedName>
        <fullName evidence="1">Transcription antitermination protein NusB</fullName>
    </recommendedName>
    <alternativeName>
        <fullName evidence="1">Antitermination factor NusB</fullName>
    </alternativeName>
</protein>
<name>NUSB_ALKOO</name>
<feature type="chain" id="PRO_1000057490" description="Transcription antitermination protein NusB">
    <location>
        <begin position="1"/>
        <end position="138"/>
    </location>
</feature>
<accession>A8MFJ3</accession>